<accession>P42958</accession>
<accession>O31481</accession>
<name>TTUC_BACSU</name>
<protein>
    <recommendedName>
        <fullName>Probable tartrate dehydrogenase/decarboxylase</fullName>
        <shortName>TDH</shortName>
        <ecNumber evidence="2">1.1.1.93</ecNumber>
        <ecNumber evidence="2">4.1.1.73</ecNumber>
    </recommendedName>
    <alternativeName>
        <fullName>D-malate dehydrogenase [decarboxylating]</fullName>
        <ecNumber evidence="2">1.1.1.83</ecNumber>
    </alternativeName>
</protein>
<organism>
    <name type="scientific">Bacillus subtilis (strain 168)</name>
    <dbReference type="NCBI Taxonomy" id="224308"/>
    <lineage>
        <taxon>Bacteria</taxon>
        <taxon>Bacillati</taxon>
        <taxon>Bacillota</taxon>
        <taxon>Bacilli</taxon>
        <taxon>Bacillales</taxon>
        <taxon>Bacillaceae</taxon>
        <taxon>Bacillus</taxon>
    </lineage>
</organism>
<keyword id="KW-0456">Lyase</keyword>
<keyword id="KW-0464">Manganese</keyword>
<keyword id="KW-0479">Metal-binding</keyword>
<keyword id="KW-0520">NAD</keyword>
<keyword id="KW-0560">Oxidoreductase</keyword>
<keyword id="KW-1185">Reference proteome</keyword>
<proteinExistence type="inferred from homology"/>
<feature type="chain" id="PRO_0000083820" description="Probable tartrate dehydrogenase/decarboxylase">
    <location>
        <begin position="1"/>
        <end position="354"/>
    </location>
</feature>
<feature type="binding site" evidence="1">
    <location>
        <position position="221"/>
    </location>
    <ligand>
        <name>Mn(2+)</name>
        <dbReference type="ChEBI" id="CHEBI:29035"/>
    </ligand>
</feature>
<feature type="binding site" evidence="1">
    <location>
        <position position="245"/>
    </location>
    <ligand>
        <name>Mn(2+)</name>
        <dbReference type="ChEBI" id="CHEBI:29035"/>
    </ligand>
</feature>
<feature type="binding site" evidence="1">
    <location>
        <position position="249"/>
    </location>
    <ligand>
        <name>Mn(2+)</name>
        <dbReference type="ChEBI" id="CHEBI:29035"/>
    </ligand>
</feature>
<feature type="sequence conflict" description="In Ref. 1; BAA07352 and 2; BAA09031." evidence="3" ref="1 2">
    <original>N</original>
    <variation>K</variation>
    <location>
        <position position="241"/>
    </location>
</feature>
<feature type="sequence conflict" description="In Ref. 1; BAA07352 and 2; BAA09031." evidence="3" ref="1 2">
    <original>G</original>
    <variation>E</variation>
    <location>
        <position position="256"/>
    </location>
</feature>
<feature type="sequence conflict" description="In Ref. 1; BAA07352 and 2; BAA09031." evidence="3" ref="1 2">
    <original>S</original>
    <variation>P</variation>
    <location>
        <position position="263"/>
    </location>
</feature>
<reference key="1">
    <citation type="journal article" date="1995" name="Microbiology">
        <title>Determination of a 17,484 bp nucleotide sequence around the 39 degrees region of the Bacillus subtilis chromosome and similarity analysis of the products of putative ORFs.</title>
        <authorList>
            <person name="Akagawa E."/>
            <person name="Kurita K."/>
            <person name="Sugawara T."/>
            <person name="Nakamura K."/>
            <person name="Kasahara Y."/>
            <person name="Ogasawara N."/>
            <person name="Yamane K."/>
        </authorList>
    </citation>
    <scope>NUCLEOTIDE SEQUENCE [GENOMIC DNA]</scope>
    <source>
        <strain>168</strain>
    </source>
</reference>
<reference key="2">
    <citation type="journal article" date="1996" name="Microbiology">
        <title>The 25 degrees-36 degrees region of the Bacillus subtilis chromosome: determination of the sequence of a 146 kb segment and identification of 113 genes.</title>
        <authorList>
            <person name="Yamane K."/>
            <person name="Kumano M."/>
            <person name="Kurita K."/>
        </authorList>
    </citation>
    <scope>NUCLEOTIDE SEQUENCE [GENOMIC DNA]</scope>
    <source>
        <strain>168</strain>
    </source>
</reference>
<reference key="3">
    <citation type="journal article" date="1997" name="Nature">
        <title>The complete genome sequence of the Gram-positive bacterium Bacillus subtilis.</title>
        <authorList>
            <person name="Kunst F."/>
            <person name="Ogasawara N."/>
            <person name="Moszer I."/>
            <person name="Albertini A.M."/>
            <person name="Alloni G."/>
            <person name="Azevedo V."/>
            <person name="Bertero M.G."/>
            <person name="Bessieres P."/>
            <person name="Bolotin A."/>
            <person name="Borchert S."/>
            <person name="Borriss R."/>
            <person name="Boursier L."/>
            <person name="Brans A."/>
            <person name="Braun M."/>
            <person name="Brignell S.C."/>
            <person name="Bron S."/>
            <person name="Brouillet S."/>
            <person name="Bruschi C.V."/>
            <person name="Caldwell B."/>
            <person name="Capuano V."/>
            <person name="Carter N.M."/>
            <person name="Choi S.-K."/>
            <person name="Codani J.-J."/>
            <person name="Connerton I.F."/>
            <person name="Cummings N.J."/>
            <person name="Daniel R.A."/>
            <person name="Denizot F."/>
            <person name="Devine K.M."/>
            <person name="Duesterhoeft A."/>
            <person name="Ehrlich S.D."/>
            <person name="Emmerson P.T."/>
            <person name="Entian K.-D."/>
            <person name="Errington J."/>
            <person name="Fabret C."/>
            <person name="Ferrari E."/>
            <person name="Foulger D."/>
            <person name="Fritz C."/>
            <person name="Fujita M."/>
            <person name="Fujita Y."/>
            <person name="Fuma S."/>
            <person name="Galizzi A."/>
            <person name="Galleron N."/>
            <person name="Ghim S.-Y."/>
            <person name="Glaser P."/>
            <person name="Goffeau A."/>
            <person name="Golightly E.J."/>
            <person name="Grandi G."/>
            <person name="Guiseppi G."/>
            <person name="Guy B.J."/>
            <person name="Haga K."/>
            <person name="Haiech J."/>
            <person name="Harwood C.R."/>
            <person name="Henaut A."/>
            <person name="Hilbert H."/>
            <person name="Holsappel S."/>
            <person name="Hosono S."/>
            <person name="Hullo M.-F."/>
            <person name="Itaya M."/>
            <person name="Jones L.-M."/>
            <person name="Joris B."/>
            <person name="Karamata D."/>
            <person name="Kasahara Y."/>
            <person name="Klaerr-Blanchard M."/>
            <person name="Klein C."/>
            <person name="Kobayashi Y."/>
            <person name="Koetter P."/>
            <person name="Koningstein G."/>
            <person name="Krogh S."/>
            <person name="Kumano M."/>
            <person name="Kurita K."/>
            <person name="Lapidus A."/>
            <person name="Lardinois S."/>
            <person name="Lauber J."/>
            <person name="Lazarevic V."/>
            <person name="Lee S.-M."/>
            <person name="Levine A."/>
            <person name="Liu H."/>
            <person name="Masuda S."/>
            <person name="Mauel C."/>
            <person name="Medigue C."/>
            <person name="Medina N."/>
            <person name="Mellado R.P."/>
            <person name="Mizuno M."/>
            <person name="Moestl D."/>
            <person name="Nakai S."/>
            <person name="Noback M."/>
            <person name="Noone D."/>
            <person name="O'Reilly M."/>
            <person name="Ogawa K."/>
            <person name="Ogiwara A."/>
            <person name="Oudega B."/>
            <person name="Park S.-H."/>
            <person name="Parro V."/>
            <person name="Pohl T.M."/>
            <person name="Portetelle D."/>
            <person name="Porwollik S."/>
            <person name="Prescott A.M."/>
            <person name="Presecan E."/>
            <person name="Pujic P."/>
            <person name="Purnelle B."/>
            <person name="Rapoport G."/>
            <person name="Rey M."/>
            <person name="Reynolds S."/>
            <person name="Rieger M."/>
            <person name="Rivolta C."/>
            <person name="Rocha E."/>
            <person name="Roche B."/>
            <person name="Rose M."/>
            <person name="Sadaie Y."/>
            <person name="Sato T."/>
            <person name="Scanlan E."/>
            <person name="Schleich S."/>
            <person name="Schroeter R."/>
            <person name="Scoffone F."/>
            <person name="Sekiguchi J."/>
            <person name="Sekowska A."/>
            <person name="Seror S.J."/>
            <person name="Serror P."/>
            <person name="Shin B.-S."/>
            <person name="Soldo B."/>
            <person name="Sorokin A."/>
            <person name="Tacconi E."/>
            <person name="Takagi T."/>
            <person name="Takahashi H."/>
            <person name="Takemaru K."/>
            <person name="Takeuchi M."/>
            <person name="Tamakoshi A."/>
            <person name="Tanaka T."/>
            <person name="Terpstra P."/>
            <person name="Tognoni A."/>
            <person name="Tosato V."/>
            <person name="Uchiyama S."/>
            <person name="Vandenbol M."/>
            <person name="Vannier F."/>
            <person name="Vassarotti A."/>
            <person name="Viari A."/>
            <person name="Wambutt R."/>
            <person name="Wedler E."/>
            <person name="Wedler H."/>
            <person name="Weitzenegger T."/>
            <person name="Winters P."/>
            <person name="Wipat A."/>
            <person name="Yamamoto H."/>
            <person name="Yamane K."/>
            <person name="Yasumoto K."/>
            <person name="Yata K."/>
            <person name="Yoshida K."/>
            <person name="Yoshikawa H.-F."/>
            <person name="Zumstein E."/>
            <person name="Yoshikawa H."/>
            <person name="Danchin A."/>
        </authorList>
    </citation>
    <scope>NUCLEOTIDE SEQUENCE [LARGE SCALE GENOMIC DNA]</scope>
    <source>
        <strain>168</strain>
    </source>
</reference>
<reference key="4">
    <citation type="journal article" date="1999" name="Genome Res.">
        <title>Detecting and analyzing DNA sequencing errors: toward a higher quality of the Bacillus subtilis genome sequence.</title>
        <authorList>
            <person name="Medigue C."/>
            <person name="Rose M."/>
            <person name="Viari A."/>
            <person name="Danchin A."/>
        </authorList>
    </citation>
    <scope>SEQUENCE REVISION</scope>
</reference>
<reference key="5">
    <citation type="journal article" date="2009" name="Microbiology">
        <title>From a consortium sequence to a unified sequence: the Bacillus subtilis 168 reference genome a decade later.</title>
        <authorList>
            <person name="Barbe V."/>
            <person name="Cruveiller S."/>
            <person name="Kunst F."/>
            <person name="Lenoble P."/>
            <person name="Meurice G."/>
            <person name="Sekowska A."/>
            <person name="Vallenet D."/>
            <person name="Wang T."/>
            <person name="Moszer I."/>
            <person name="Medigue C."/>
            <person name="Danchin A."/>
        </authorList>
    </citation>
    <scope>SEQUENCE REVISION TO 241; 256 AND 263</scope>
</reference>
<dbReference type="EC" id="1.1.1.93" evidence="2"/>
<dbReference type="EC" id="4.1.1.73" evidence="2"/>
<dbReference type="EC" id="1.1.1.83" evidence="2"/>
<dbReference type="EMBL" id="D38161">
    <property type="protein sequence ID" value="BAA07352.1"/>
    <property type="status" value="ALT_FRAME"/>
    <property type="molecule type" value="Genomic_DNA"/>
</dbReference>
<dbReference type="EMBL" id="D50453">
    <property type="protein sequence ID" value="BAA09031.1"/>
    <property type="status" value="ALT_FRAME"/>
    <property type="molecule type" value="Genomic_DNA"/>
</dbReference>
<dbReference type="EMBL" id="AL009126">
    <property type="protein sequence ID" value="CAB12208.3"/>
    <property type="molecule type" value="Genomic_DNA"/>
</dbReference>
<dbReference type="PIR" id="A69765">
    <property type="entry name" value="A69765"/>
</dbReference>
<dbReference type="RefSeq" id="NP_388282.3">
    <property type="nucleotide sequence ID" value="NC_000964.3"/>
</dbReference>
<dbReference type="RefSeq" id="WP_003234436.1">
    <property type="nucleotide sequence ID" value="NZ_OZ025638.1"/>
</dbReference>
<dbReference type="SMR" id="P42958"/>
<dbReference type="FunCoup" id="P42958">
    <property type="interactions" value="171"/>
</dbReference>
<dbReference type="STRING" id="224308.BSU04000"/>
<dbReference type="jPOST" id="P42958"/>
<dbReference type="PaxDb" id="224308-BSU04000"/>
<dbReference type="EnsemblBacteria" id="CAB12208">
    <property type="protein sequence ID" value="CAB12208"/>
    <property type="gene ID" value="BSU_04000"/>
</dbReference>
<dbReference type="GeneID" id="938262"/>
<dbReference type="KEGG" id="bsu:BSU04000"/>
<dbReference type="PATRIC" id="fig|224308.43.peg.416"/>
<dbReference type="eggNOG" id="COG0473">
    <property type="taxonomic scope" value="Bacteria"/>
</dbReference>
<dbReference type="InParanoid" id="P42958"/>
<dbReference type="OrthoDB" id="9806254at2"/>
<dbReference type="PhylomeDB" id="P42958"/>
<dbReference type="BioCyc" id="BSUB:BSU04000-MONOMER"/>
<dbReference type="Proteomes" id="UP000001570">
    <property type="component" value="Chromosome"/>
</dbReference>
<dbReference type="GO" id="GO:0046553">
    <property type="term" value="F:D-malate dehydrogenase (decarboxylating) (NAD+) activity"/>
    <property type="evidence" value="ECO:0007669"/>
    <property type="project" value="UniProtKB-EC"/>
</dbReference>
<dbReference type="GO" id="GO:0000287">
    <property type="term" value="F:magnesium ion binding"/>
    <property type="evidence" value="ECO:0007669"/>
    <property type="project" value="InterPro"/>
</dbReference>
<dbReference type="GO" id="GO:0051287">
    <property type="term" value="F:NAD binding"/>
    <property type="evidence" value="ECO:0007669"/>
    <property type="project" value="InterPro"/>
</dbReference>
<dbReference type="GO" id="GO:0050319">
    <property type="term" value="F:tartrate decarboxylase activity"/>
    <property type="evidence" value="ECO:0007669"/>
    <property type="project" value="UniProtKB-EC"/>
</dbReference>
<dbReference type="GO" id="GO:0009027">
    <property type="term" value="F:tartrate dehydrogenase activity"/>
    <property type="evidence" value="ECO:0007669"/>
    <property type="project" value="UniProtKB-EC"/>
</dbReference>
<dbReference type="Gene3D" id="3.40.718.10">
    <property type="entry name" value="Isopropylmalate Dehydrogenase"/>
    <property type="match status" value="1"/>
</dbReference>
<dbReference type="InterPro" id="IPR050501">
    <property type="entry name" value="ICDH/IPMDH"/>
</dbReference>
<dbReference type="InterPro" id="IPR019818">
    <property type="entry name" value="IsoCit/isopropylmalate_DH_CS"/>
</dbReference>
<dbReference type="InterPro" id="IPR024084">
    <property type="entry name" value="IsoPropMal-DH-like_dom"/>
</dbReference>
<dbReference type="InterPro" id="IPR011829">
    <property type="entry name" value="TTC_DH"/>
</dbReference>
<dbReference type="NCBIfam" id="NF006048">
    <property type="entry name" value="PRK08194.1"/>
    <property type="match status" value="1"/>
</dbReference>
<dbReference type="NCBIfam" id="TIGR02089">
    <property type="entry name" value="TTC"/>
    <property type="match status" value="1"/>
</dbReference>
<dbReference type="PANTHER" id="PTHR43275">
    <property type="entry name" value="D-MALATE DEHYDROGENASE [DECARBOXYLATING]"/>
    <property type="match status" value="1"/>
</dbReference>
<dbReference type="PANTHER" id="PTHR43275:SF1">
    <property type="entry name" value="D-MALATE DEHYDROGENASE [DECARBOXYLATING]"/>
    <property type="match status" value="1"/>
</dbReference>
<dbReference type="Pfam" id="PF00180">
    <property type="entry name" value="Iso_dh"/>
    <property type="match status" value="1"/>
</dbReference>
<dbReference type="SMART" id="SM01329">
    <property type="entry name" value="Iso_dh"/>
    <property type="match status" value="1"/>
</dbReference>
<dbReference type="SUPFAM" id="SSF53659">
    <property type="entry name" value="Isocitrate/Isopropylmalate dehydrogenase-like"/>
    <property type="match status" value="1"/>
</dbReference>
<dbReference type="PROSITE" id="PS00470">
    <property type="entry name" value="IDH_IMDH"/>
    <property type="match status" value="1"/>
</dbReference>
<comment type="function">
    <text evidence="2">Has multiple catalytic activities. Apart from catalyzing the oxidation of (+)-tartrate to oxaloglycolate, also converts meso-tartrate to D-glycerate and catalyzes the oxidative decarboxylation of D-malate to pyruvate.</text>
</comment>
<comment type="catalytic activity">
    <reaction evidence="2">
        <text>tartrate + NAD(+) = 2-hydroxy-3-oxosuccinate + NADH + H(+)</text>
        <dbReference type="Rhea" id="RHEA:18853"/>
        <dbReference type="ChEBI" id="CHEBI:15378"/>
        <dbReference type="ChEBI" id="CHEBI:30929"/>
        <dbReference type="ChEBI" id="CHEBI:57540"/>
        <dbReference type="ChEBI" id="CHEBI:57945"/>
        <dbReference type="ChEBI" id="CHEBI:58265"/>
        <dbReference type="EC" id="1.1.1.93"/>
    </reaction>
</comment>
<comment type="catalytic activity">
    <reaction evidence="2">
        <text>(2R,3S)-tartrate + NAD(+) = 2-hydroxy-3-oxosuccinate + NADH + H(+)</text>
        <dbReference type="Rhea" id="RHEA:16457"/>
        <dbReference type="ChEBI" id="CHEBI:15378"/>
        <dbReference type="ChEBI" id="CHEBI:30928"/>
        <dbReference type="ChEBI" id="CHEBI:57540"/>
        <dbReference type="ChEBI" id="CHEBI:57945"/>
        <dbReference type="ChEBI" id="CHEBI:58265"/>
        <dbReference type="EC" id="1.1.1.93"/>
    </reaction>
</comment>
<comment type="catalytic activity">
    <reaction evidence="2">
        <text>(2R,3R)-tartrate + NAD(+) = 2-hydroxy-3-oxosuccinate + NADH + H(+)</text>
        <dbReference type="Rhea" id="RHEA:15209"/>
        <dbReference type="ChEBI" id="CHEBI:15378"/>
        <dbReference type="ChEBI" id="CHEBI:30924"/>
        <dbReference type="ChEBI" id="CHEBI:57540"/>
        <dbReference type="ChEBI" id="CHEBI:57945"/>
        <dbReference type="ChEBI" id="CHEBI:58265"/>
        <dbReference type="EC" id="1.1.1.93"/>
    </reaction>
</comment>
<comment type="catalytic activity">
    <reaction evidence="2">
        <text>(2R,3R)-tartrate + H(+) = (R)-glycerate + CO2</text>
        <dbReference type="Rhea" id="RHEA:13317"/>
        <dbReference type="ChEBI" id="CHEBI:15378"/>
        <dbReference type="ChEBI" id="CHEBI:16526"/>
        <dbReference type="ChEBI" id="CHEBI:16659"/>
        <dbReference type="ChEBI" id="CHEBI:30924"/>
        <dbReference type="EC" id="4.1.1.73"/>
    </reaction>
</comment>
<comment type="catalytic activity">
    <reaction evidence="2">
        <text>(R)-malate + NAD(+) = pyruvate + CO2 + NADH</text>
        <dbReference type="Rhea" id="RHEA:18365"/>
        <dbReference type="ChEBI" id="CHEBI:15361"/>
        <dbReference type="ChEBI" id="CHEBI:15588"/>
        <dbReference type="ChEBI" id="CHEBI:16526"/>
        <dbReference type="ChEBI" id="CHEBI:57540"/>
        <dbReference type="ChEBI" id="CHEBI:57945"/>
        <dbReference type="EC" id="1.1.1.83"/>
    </reaction>
</comment>
<comment type="cofactor">
    <cofactor evidence="2">
        <name>Mg(2+)</name>
        <dbReference type="ChEBI" id="CHEBI:18420"/>
    </cofactor>
    <cofactor evidence="2">
        <name>Mn(2+)</name>
        <dbReference type="ChEBI" id="CHEBI:29035"/>
    </cofactor>
    <text evidence="1">Binds 1 Mg(2+) or Mn(2+) ion per subunit.</text>
</comment>
<comment type="cofactor">
    <cofactor evidence="2">
        <name>K(+)</name>
        <dbReference type="ChEBI" id="CHEBI:29103"/>
    </cofactor>
</comment>
<comment type="similarity">
    <text evidence="3">Belongs to the isocitrate and isopropylmalate dehydrogenases family.</text>
</comment>
<comment type="sequence caution" evidence="3">
    <conflict type="frameshift">
        <sequence resource="EMBL-CDS" id="BAA07352"/>
    </conflict>
</comment>
<comment type="sequence caution" evidence="3">
    <conflict type="frameshift">
        <sequence resource="EMBL-CDS" id="BAA09031"/>
    </conflict>
</comment>
<evidence type="ECO:0000250" key="1">
    <source>
        <dbReference type="UniProtKB" id="P37412"/>
    </source>
</evidence>
<evidence type="ECO:0000250" key="2">
    <source>
        <dbReference type="UniProtKB" id="Q51945"/>
    </source>
</evidence>
<evidence type="ECO:0000305" key="3"/>
<gene>
    <name type="primary">ycsA</name>
    <name type="ordered locus">BSU04000</name>
</gene>
<sequence>MTMKQFEIAAIPGDGVGKEVVAAAEKVLHTAAEVHGGLSFSFTAFPWSCDYYLEHGKMMPEDGIHTLTQFEAVFLGAVGNPKLVPDHISLWGLLLKIRRELELSINMRPAKQMAGITSPLLHPNDFDFVVIRENSEGEYSEVGGRIHRGDDEIAIQNAVFTRKATERVMRFAFELAKKRRSHVTSATKSNGIYHAMPFWDEVFQQTAADYSGIETSSQHIDALAAFFVTRPETFDVIVASNLFGDILTDISSSLMGSIGIAPSANINPSGKYPSMFEPVHGSAPDIAGQGLANPIGQIWTAKLMLDHFGEEELGAKILDVMEQVTADGIKTRDIGGQSTTAEVTDEICSRLRKL</sequence>